<gene>
    <name evidence="1" type="primary">murG</name>
    <name type="ordered locus">GM21_0508</name>
</gene>
<dbReference type="EC" id="2.4.1.227" evidence="1"/>
<dbReference type="EMBL" id="CP001661">
    <property type="protein sequence ID" value="ACT16588.1"/>
    <property type="molecule type" value="Genomic_DNA"/>
</dbReference>
<dbReference type="SMR" id="C6DZK6"/>
<dbReference type="STRING" id="443144.GM21_0508"/>
<dbReference type="CAZy" id="GT28">
    <property type="family name" value="Glycosyltransferase Family 28"/>
</dbReference>
<dbReference type="KEGG" id="gem:GM21_0508"/>
<dbReference type="eggNOG" id="COG0707">
    <property type="taxonomic scope" value="Bacteria"/>
</dbReference>
<dbReference type="HOGENOM" id="CLU_037404_0_1_7"/>
<dbReference type="OrthoDB" id="9808936at2"/>
<dbReference type="UniPathway" id="UPA00219"/>
<dbReference type="GO" id="GO:0005886">
    <property type="term" value="C:plasma membrane"/>
    <property type="evidence" value="ECO:0007669"/>
    <property type="project" value="UniProtKB-SubCell"/>
</dbReference>
<dbReference type="GO" id="GO:0051991">
    <property type="term" value="F:UDP-N-acetyl-D-glucosamine:N-acetylmuramoyl-L-alanyl-D-glutamyl-meso-2,6-diaminopimelyl-D-alanyl-D-alanine-diphosphoundecaprenol 4-beta-N-acetylglucosaminlytransferase activity"/>
    <property type="evidence" value="ECO:0007669"/>
    <property type="project" value="RHEA"/>
</dbReference>
<dbReference type="GO" id="GO:0050511">
    <property type="term" value="F:undecaprenyldiphospho-muramoylpentapeptide beta-N-acetylglucosaminyltransferase activity"/>
    <property type="evidence" value="ECO:0007669"/>
    <property type="project" value="UniProtKB-UniRule"/>
</dbReference>
<dbReference type="GO" id="GO:0005975">
    <property type="term" value="P:carbohydrate metabolic process"/>
    <property type="evidence" value="ECO:0007669"/>
    <property type="project" value="InterPro"/>
</dbReference>
<dbReference type="GO" id="GO:0051301">
    <property type="term" value="P:cell division"/>
    <property type="evidence" value="ECO:0007669"/>
    <property type="project" value="UniProtKB-KW"/>
</dbReference>
<dbReference type="GO" id="GO:0071555">
    <property type="term" value="P:cell wall organization"/>
    <property type="evidence" value="ECO:0007669"/>
    <property type="project" value="UniProtKB-KW"/>
</dbReference>
<dbReference type="GO" id="GO:0030259">
    <property type="term" value="P:lipid glycosylation"/>
    <property type="evidence" value="ECO:0007669"/>
    <property type="project" value="UniProtKB-UniRule"/>
</dbReference>
<dbReference type="GO" id="GO:0009252">
    <property type="term" value="P:peptidoglycan biosynthetic process"/>
    <property type="evidence" value="ECO:0007669"/>
    <property type="project" value="UniProtKB-UniRule"/>
</dbReference>
<dbReference type="GO" id="GO:0008360">
    <property type="term" value="P:regulation of cell shape"/>
    <property type="evidence" value="ECO:0007669"/>
    <property type="project" value="UniProtKB-KW"/>
</dbReference>
<dbReference type="CDD" id="cd03785">
    <property type="entry name" value="GT28_MurG"/>
    <property type="match status" value="1"/>
</dbReference>
<dbReference type="Gene3D" id="3.40.50.2000">
    <property type="entry name" value="Glycogen Phosphorylase B"/>
    <property type="match status" value="2"/>
</dbReference>
<dbReference type="HAMAP" id="MF_00033">
    <property type="entry name" value="MurG"/>
    <property type="match status" value="1"/>
</dbReference>
<dbReference type="InterPro" id="IPR006009">
    <property type="entry name" value="GlcNAc_MurG"/>
</dbReference>
<dbReference type="InterPro" id="IPR007235">
    <property type="entry name" value="Glyco_trans_28_C"/>
</dbReference>
<dbReference type="InterPro" id="IPR004276">
    <property type="entry name" value="GlycoTrans_28_N"/>
</dbReference>
<dbReference type="NCBIfam" id="TIGR01133">
    <property type="entry name" value="murG"/>
    <property type="match status" value="1"/>
</dbReference>
<dbReference type="PANTHER" id="PTHR21015:SF22">
    <property type="entry name" value="GLYCOSYLTRANSFERASE"/>
    <property type="match status" value="1"/>
</dbReference>
<dbReference type="PANTHER" id="PTHR21015">
    <property type="entry name" value="UDP-N-ACETYLGLUCOSAMINE--N-ACETYLMURAMYL-(PENTAPEPTIDE) PYROPHOSPHORYL-UNDECAPRENOL N-ACETYLGLUCOSAMINE TRANSFERASE 1"/>
    <property type="match status" value="1"/>
</dbReference>
<dbReference type="Pfam" id="PF04101">
    <property type="entry name" value="Glyco_tran_28_C"/>
    <property type="match status" value="1"/>
</dbReference>
<dbReference type="Pfam" id="PF03033">
    <property type="entry name" value="Glyco_transf_28"/>
    <property type="match status" value="1"/>
</dbReference>
<dbReference type="SUPFAM" id="SSF53756">
    <property type="entry name" value="UDP-Glycosyltransferase/glycogen phosphorylase"/>
    <property type="match status" value="1"/>
</dbReference>
<organism>
    <name type="scientific">Geobacter sp. (strain M21)</name>
    <dbReference type="NCBI Taxonomy" id="443144"/>
    <lineage>
        <taxon>Bacteria</taxon>
        <taxon>Pseudomonadati</taxon>
        <taxon>Thermodesulfobacteriota</taxon>
        <taxon>Desulfuromonadia</taxon>
        <taxon>Geobacterales</taxon>
        <taxon>Geobacteraceae</taxon>
        <taxon>Geobacter</taxon>
    </lineage>
</organism>
<sequence>MRLIIAGGGTGGHLFPGIAIADEFLARSPENEVLFVGTERGIEARLLPKLGYKLALISASGMKGMGTIKKIMSAGRLLYGYSQSRKILKEFRPDLVLGVGGYASAPIVLAARGMGVRRFIHEQNAFPGLTNKVLGRIVDGVFISMPEAESFFPKEITQMTGNPIRKEILWGFQERVRSVGDTFSILVFGGSAGAQRVNSALLEALPHLEGVKGKLRITHQTGEKDAARVREGYQAQGVQAQVLSFIDDMSAAYGAADLVVCRAGATTIAEVTACGKGCIFIPFPYAADDHQRKNAESLVHKNAGVMILEEDLTGERLAAKILDLMEHPAELAEMEKNARALAQLDAAQAIVAAMVTKNQERDKDKENQRAR</sequence>
<keyword id="KW-0131">Cell cycle</keyword>
<keyword id="KW-0132">Cell division</keyword>
<keyword id="KW-0997">Cell inner membrane</keyword>
<keyword id="KW-1003">Cell membrane</keyword>
<keyword id="KW-0133">Cell shape</keyword>
<keyword id="KW-0961">Cell wall biogenesis/degradation</keyword>
<keyword id="KW-0328">Glycosyltransferase</keyword>
<keyword id="KW-0472">Membrane</keyword>
<keyword id="KW-0573">Peptidoglycan synthesis</keyword>
<keyword id="KW-0808">Transferase</keyword>
<accession>C6DZK6</accession>
<proteinExistence type="inferred from homology"/>
<protein>
    <recommendedName>
        <fullName evidence="1">UDP-N-acetylglucosamine--N-acetylmuramyl-(pentapeptide) pyrophosphoryl-undecaprenol N-acetylglucosamine transferase</fullName>
        <ecNumber evidence="1">2.4.1.227</ecNumber>
    </recommendedName>
    <alternativeName>
        <fullName evidence="1">Undecaprenyl-PP-MurNAc-pentapeptide-UDPGlcNAc GlcNAc transferase</fullName>
    </alternativeName>
</protein>
<reference key="1">
    <citation type="submission" date="2009-07" db="EMBL/GenBank/DDBJ databases">
        <title>Complete sequence of Geobacter sp. M21.</title>
        <authorList>
            <consortium name="US DOE Joint Genome Institute"/>
            <person name="Lucas S."/>
            <person name="Copeland A."/>
            <person name="Lapidus A."/>
            <person name="Glavina del Rio T."/>
            <person name="Dalin E."/>
            <person name="Tice H."/>
            <person name="Bruce D."/>
            <person name="Goodwin L."/>
            <person name="Pitluck S."/>
            <person name="Saunders E."/>
            <person name="Brettin T."/>
            <person name="Detter J.C."/>
            <person name="Han C."/>
            <person name="Larimer F."/>
            <person name="Land M."/>
            <person name="Hauser L."/>
            <person name="Kyrpides N."/>
            <person name="Ovchinnikova G."/>
            <person name="Lovley D."/>
        </authorList>
    </citation>
    <scope>NUCLEOTIDE SEQUENCE [LARGE SCALE GENOMIC DNA]</scope>
    <source>
        <strain>M21</strain>
    </source>
</reference>
<feature type="chain" id="PRO_1000202022" description="UDP-N-acetylglucosamine--N-acetylmuramyl-(pentapeptide) pyrophosphoryl-undecaprenol N-acetylglucosamine transferase">
    <location>
        <begin position="1"/>
        <end position="371"/>
    </location>
</feature>
<feature type="binding site" evidence="1">
    <location>
        <begin position="10"/>
        <end position="12"/>
    </location>
    <ligand>
        <name>UDP-N-acetyl-alpha-D-glucosamine</name>
        <dbReference type="ChEBI" id="CHEBI:57705"/>
    </ligand>
</feature>
<feature type="binding site" evidence="1">
    <location>
        <position position="124"/>
    </location>
    <ligand>
        <name>UDP-N-acetyl-alpha-D-glucosamine</name>
        <dbReference type="ChEBI" id="CHEBI:57705"/>
    </ligand>
</feature>
<feature type="binding site" evidence="1">
    <location>
        <position position="165"/>
    </location>
    <ligand>
        <name>UDP-N-acetyl-alpha-D-glucosamine</name>
        <dbReference type="ChEBI" id="CHEBI:57705"/>
    </ligand>
</feature>
<feature type="binding site" evidence="1">
    <location>
        <position position="191"/>
    </location>
    <ligand>
        <name>UDP-N-acetyl-alpha-D-glucosamine</name>
        <dbReference type="ChEBI" id="CHEBI:57705"/>
    </ligand>
</feature>
<feature type="binding site" evidence="1">
    <location>
        <position position="246"/>
    </location>
    <ligand>
        <name>UDP-N-acetyl-alpha-D-glucosamine</name>
        <dbReference type="ChEBI" id="CHEBI:57705"/>
    </ligand>
</feature>
<feature type="binding site" evidence="1">
    <location>
        <position position="291"/>
    </location>
    <ligand>
        <name>UDP-N-acetyl-alpha-D-glucosamine</name>
        <dbReference type="ChEBI" id="CHEBI:57705"/>
    </ligand>
</feature>
<name>MURG_GEOSM</name>
<evidence type="ECO:0000255" key="1">
    <source>
        <dbReference type="HAMAP-Rule" id="MF_00033"/>
    </source>
</evidence>
<comment type="function">
    <text evidence="1">Cell wall formation. Catalyzes the transfer of a GlcNAc subunit on undecaprenyl-pyrophosphoryl-MurNAc-pentapeptide (lipid intermediate I) to form undecaprenyl-pyrophosphoryl-MurNAc-(pentapeptide)GlcNAc (lipid intermediate II).</text>
</comment>
<comment type="catalytic activity">
    <reaction evidence="1">
        <text>di-trans,octa-cis-undecaprenyl diphospho-N-acetyl-alpha-D-muramoyl-L-alanyl-D-glutamyl-meso-2,6-diaminopimeloyl-D-alanyl-D-alanine + UDP-N-acetyl-alpha-D-glucosamine = di-trans,octa-cis-undecaprenyl diphospho-[N-acetyl-alpha-D-glucosaminyl-(1-&gt;4)]-N-acetyl-alpha-D-muramoyl-L-alanyl-D-glutamyl-meso-2,6-diaminopimeloyl-D-alanyl-D-alanine + UDP + H(+)</text>
        <dbReference type="Rhea" id="RHEA:31227"/>
        <dbReference type="ChEBI" id="CHEBI:15378"/>
        <dbReference type="ChEBI" id="CHEBI:57705"/>
        <dbReference type="ChEBI" id="CHEBI:58223"/>
        <dbReference type="ChEBI" id="CHEBI:61387"/>
        <dbReference type="ChEBI" id="CHEBI:61388"/>
        <dbReference type="EC" id="2.4.1.227"/>
    </reaction>
</comment>
<comment type="pathway">
    <text evidence="1">Cell wall biogenesis; peptidoglycan biosynthesis.</text>
</comment>
<comment type="subcellular location">
    <subcellularLocation>
        <location evidence="1">Cell inner membrane</location>
        <topology evidence="1">Peripheral membrane protein</topology>
        <orientation evidence="1">Cytoplasmic side</orientation>
    </subcellularLocation>
</comment>
<comment type="similarity">
    <text evidence="1">Belongs to the glycosyltransferase 28 family. MurG subfamily.</text>
</comment>